<protein>
    <recommendedName>
        <fullName>Porin OmpL</fullName>
    </recommendedName>
</protein>
<name>OMPL_SALPA</name>
<organism>
    <name type="scientific">Salmonella paratyphi A (strain ATCC 9150 / SARB42)</name>
    <dbReference type="NCBI Taxonomy" id="295319"/>
    <lineage>
        <taxon>Bacteria</taxon>
        <taxon>Pseudomonadati</taxon>
        <taxon>Pseudomonadota</taxon>
        <taxon>Gammaproteobacteria</taxon>
        <taxon>Enterobacterales</taxon>
        <taxon>Enterobacteriaceae</taxon>
        <taxon>Salmonella</taxon>
    </lineage>
</organism>
<dbReference type="EMBL" id="CP000026">
    <property type="protein sequence ID" value="AAV79625.1"/>
    <property type="molecule type" value="Genomic_DNA"/>
</dbReference>
<dbReference type="RefSeq" id="WP_000838827.1">
    <property type="nucleotide sequence ID" value="NC_006511.1"/>
</dbReference>
<dbReference type="SMR" id="Q5PKD5"/>
<dbReference type="KEGG" id="spt:SPA3857"/>
<dbReference type="HOGENOM" id="CLU_103714_0_0_6"/>
<dbReference type="Proteomes" id="UP000008185">
    <property type="component" value="Chromosome"/>
</dbReference>
<dbReference type="GO" id="GO:0009279">
    <property type="term" value="C:cell outer membrane"/>
    <property type="evidence" value="ECO:0007669"/>
    <property type="project" value="UniProtKB-SubCell"/>
</dbReference>
<dbReference type="GO" id="GO:0046930">
    <property type="term" value="C:pore complex"/>
    <property type="evidence" value="ECO:0007669"/>
    <property type="project" value="UniProtKB-KW"/>
</dbReference>
<dbReference type="GO" id="GO:0015288">
    <property type="term" value="F:porin activity"/>
    <property type="evidence" value="ECO:0007669"/>
    <property type="project" value="UniProtKB-KW"/>
</dbReference>
<dbReference type="GO" id="GO:0006811">
    <property type="term" value="P:monoatomic ion transport"/>
    <property type="evidence" value="ECO:0007669"/>
    <property type="project" value="UniProtKB-KW"/>
</dbReference>
<dbReference type="GO" id="GO:0015772">
    <property type="term" value="P:oligosaccharide transport"/>
    <property type="evidence" value="ECO:0007669"/>
    <property type="project" value="TreeGrafter"/>
</dbReference>
<dbReference type="FunFam" id="2.40.160.40:FF:000001">
    <property type="entry name" value="Porin OmpL"/>
    <property type="match status" value="1"/>
</dbReference>
<dbReference type="Gene3D" id="2.40.160.40">
    <property type="entry name" value="monomeric porin ompg"/>
    <property type="match status" value="1"/>
</dbReference>
<dbReference type="InterPro" id="IPR053713">
    <property type="entry name" value="Bact_OM_Channel_sf"/>
</dbReference>
<dbReference type="InterPro" id="IPR009331">
    <property type="entry name" value="Oligogalacturonate-sp_porin"/>
</dbReference>
<dbReference type="NCBIfam" id="NF007434">
    <property type="entry name" value="PRK09980.1"/>
    <property type="match status" value="1"/>
</dbReference>
<dbReference type="PANTHER" id="PTHR38105:SF2">
    <property type="entry name" value="N-ACETYLNEURAMINIC ACID OUTER MEMBRANE CHANNEL PROTEIN NANC-RELATED"/>
    <property type="match status" value="1"/>
</dbReference>
<dbReference type="PANTHER" id="PTHR38105">
    <property type="entry name" value="OUTER MEMBRANE PROTEIN-RELATED-RELATED"/>
    <property type="match status" value="1"/>
</dbReference>
<dbReference type="Pfam" id="PF06178">
    <property type="entry name" value="KdgM"/>
    <property type="match status" value="1"/>
</dbReference>
<dbReference type="SUPFAM" id="SSF56935">
    <property type="entry name" value="Porins"/>
    <property type="match status" value="1"/>
</dbReference>
<evidence type="ECO:0000250" key="1"/>
<evidence type="ECO:0000305" key="2"/>
<accession>Q5PKD5</accession>
<gene>
    <name type="primary">ompL</name>
    <name type="ordered locus">SPA3857</name>
</gene>
<proteinExistence type="inferred from homology"/>
<keyword id="KW-0998">Cell outer membrane</keyword>
<keyword id="KW-0406">Ion transport</keyword>
<keyword id="KW-0472">Membrane</keyword>
<keyword id="KW-0626">Porin</keyword>
<keyword id="KW-0732">Signal</keyword>
<keyword id="KW-0762">Sugar transport</keyword>
<keyword id="KW-0812">Transmembrane</keyword>
<keyword id="KW-1134">Transmembrane beta strand</keyword>
<keyword id="KW-0813">Transport</keyword>
<sequence>MKSLNTLVILTSVISTSVFAGAYVENREAYNLASDQMEFMLRVGYNSDMGAGIMLTNTYTLQRDDELKHGYNEIEGWYPLFKPTDKLTIQPGGLINDKSIGSGGAVYLDVNYKFTPWFNLTVRNRYNHNNYSSTDLNGELDNNDSYEIGNYWNFIITDKFSYTFEPHYFYNINDFNSSNGTKHHWEITNTFRYRINEHWLPYFELRWLDRNVGPYHREQNQIRIGAKYFF</sequence>
<comment type="function">
    <text evidence="1">Outer membrane channel protein that allows an efficient diffusion of low-molecular-weight solutes such as small sugars and tetraglycine. However, the specific substrate recognized by the OmpL channel is unknown (By similarity).</text>
</comment>
<comment type="subcellular location">
    <subcellularLocation>
        <location evidence="1">Cell outer membrane</location>
        <topology evidence="1">Multi-pass membrane protein</topology>
    </subcellularLocation>
</comment>
<comment type="similarity">
    <text evidence="2">Belongs to the oligogalacturonate-specific porin KdgM (TC 1.B.35) family. OmpL subfamily.</text>
</comment>
<feature type="signal peptide" evidence="1">
    <location>
        <begin position="1"/>
        <end position="20"/>
    </location>
</feature>
<feature type="chain" id="PRO_0000016607" description="Porin OmpL">
    <location>
        <begin position="21"/>
        <end position="230"/>
    </location>
</feature>
<reference key="1">
    <citation type="journal article" date="2004" name="Nat. Genet.">
        <title>Comparison of genome degradation in Paratyphi A and Typhi, human-restricted serovars of Salmonella enterica that cause typhoid.</title>
        <authorList>
            <person name="McClelland M."/>
            <person name="Sanderson K.E."/>
            <person name="Clifton S.W."/>
            <person name="Latreille P."/>
            <person name="Porwollik S."/>
            <person name="Sabo A."/>
            <person name="Meyer R."/>
            <person name="Bieri T."/>
            <person name="Ozersky P."/>
            <person name="McLellan M."/>
            <person name="Harkins C.R."/>
            <person name="Wang C."/>
            <person name="Nguyen C."/>
            <person name="Berghoff A."/>
            <person name="Elliott G."/>
            <person name="Kohlberg S."/>
            <person name="Strong C."/>
            <person name="Du F."/>
            <person name="Carter J."/>
            <person name="Kremizki C."/>
            <person name="Layman D."/>
            <person name="Leonard S."/>
            <person name="Sun H."/>
            <person name="Fulton L."/>
            <person name="Nash W."/>
            <person name="Miner T."/>
            <person name="Minx P."/>
            <person name="Delehaunty K."/>
            <person name="Fronick C."/>
            <person name="Magrini V."/>
            <person name="Nhan M."/>
            <person name="Warren W."/>
            <person name="Florea L."/>
            <person name="Spieth J."/>
            <person name="Wilson R.K."/>
        </authorList>
    </citation>
    <scope>NUCLEOTIDE SEQUENCE [LARGE SCALE GENOMIC DNA]</scope>
    <source>
        <strain>ATCC 9150 / SARB42</strain>
    </source>
</reference>